<dbReference type="EC" id="3.6.1.1" evidence="1"/>
<dbReference type="EMBL" id="AP008934">
    <property type="protein sequence ID" value="BAE18017.1"/>
    <property type="molecule type" value="Genomic_DNA"/>
</dbReference>
<dbReference type="RefSeq" id="WP_011302751.1">
    <property type="nucleotide sequence ID" value="NZ_MTGA01000031.1"/>
</dbReference>
<dbReference type="SMR" id="Q49YW3"/>
<dbReference type="KEGG" id="ssp:SSP0872"/>
<dbReference type="eggNOG" id="COG1227">
    <property type="taxonomic scope" value="Bacteria"/>
</dbReference>
<dbReference type="HOGENOM" id="CLU_025243_0_1_9"/>
<dbReference type="OrthoDB" id="9766150at2"/>
<dbReference type="Proteomes" id="UP000006371">
    <property type="component" value="Chromosome"/>
</dbReference>
<dbReference type="GO" id="GO:0005737">
    <property type="term" value="C:cytoplasm"/>
    <property type="evidence" value="ECO:0007669"/>
    <property type="project" value="UniProtKB-SubCell"/>
</dbReference>
<dbReference type="GO" id="GO:0004427">
    <property type="term" value="F:inorganic diphosphate phosphatase activity"/>
    <property type="evidence" value="ECO:0007669"/>
    <property type="project" value="UniProtKB-UniRule"/>
</dbReference>
<dbReference type="GO" id="GO:0030145">
    <property type="term" value="F:manganese ion binding"/>
    <property type="evidence" value="ECO:0007669"/>
    <property type="project" value="UniProtKB-UniRule"/>
</dbReference>
<dbReference type="FunFam" id="3.10.310.20:FF:000001">
    <property type="entry name" value="Probable manganese-dependent inorganic pyrophosphatase"/>
    <property type="match status" value="1"/>
</dbReference>
<dbReference type="FunFam" id="3.90.1640.10:FF:000001">
    <property type="entry name" value="Probable manganese-dependent inorganic pyrophosphatase"/>
    <property type="match status" value="1"/>
</dbReference>
<dbReference type="Gene3D" id="3.10.310.20">
    <property type="entry name" value="DHHA2 domain"/>
    <property type="match status" value="1"/>
</dbReference>
<dbReference type="Gene3D" id="3.90.1640.10">
    <property type="entry name" value="inorganic pyrophosphatase (n-terminal core)"/>
    <property type="match status" value="1"/>
</dbReference>
<dbReference type="HAMAP" id="MF_00207">
    <property type="entry name" value="PPase_C"/>
    <property type="match status" value="1"/>
</dbReference>
<dbReference type="InterPro" id="IPR001667">
    <property type="entry name" value="DDH_dom"/>
</dbReference>
<dbReference type="InterPro" id="IPR038763">
    <property type="entry name" value="DHH_sf"/>
</dbReference>
<dbReference type="InterPro" id="IPR004097">
    <property type="entry name" value="DHHA2"/>
</dbReference>
<dbReference type="InterPro" id="IPR038222">
    <property type="entry name" value="DHHA2_dom_sf"/>
</dbReference>
<dbReference type="InterPro" id="IPR022934">
    <property type="entry name" value="Mn-dep_inorganic_PyrPase"/>
</dbReference>
<dbReference type="NCBIfam" id="NF003877">
    <property type="entry name" value="PRK05427.1"/>
    <property type="match status" value="1"/>
</dbReference>
<dbReference type="PANTHER" id="PTHR12112">
    <property type="entry name" value="BNIP - RELATED"/>
    <property type="match status" value="1"/>
</dbReference>
<dbReference type="PANTHER" id="PTHR12112:SF22">
    <property type="entry name" value="MANGANESE-DEPENDENT INORGANIC PYROPHOSPHATASE-RELATED"/>
    <property type="match status" value="1"/>
</dbReference>
<dbReference type="Pfam" id="PF01368">
    <property type="entry name" value="DHH"/>
    <property type="match status" value="1"/>
</dbReference>
<dbReference type="Pfam" id="PF02833">
    <property type="entry name" value="DHHA2"/>
    <property type="match status" value="1"/>
</dbReference>
<dbReference type="SMART" id="SM01131">
    <property type="entry name" value="DHHA2"/>
    <property type="match status" value="1"/>
</dbReference>
<dbReference type="SUPFAM" id="SSF64182">
    <property type="entry name" value="DHH phosphoesterases"/>
    <property type="match status" value="1"/>
</dbReference>
<proteinExistence type="inferred from homology"/>
<comment type="catalytic activity">
    <reaction evidence="1">
        <text>diphosphate + H2O = 2 phosphate + H(+)</text>
        <dbReference type="Rhea" id="RHEA:24576"/>
        <dbReference type="ChEBI" id="CHEBI:15377"/>
        <dbReference type="ChEBI" id="CHEBI:15378"/>
        <dbReference type="ChEBI" id="CHEBI:33019"/>
        <dbReference type="ChEBI" id="CHEBI:43474"/>
        <dbReference type="EC" id="3.6.1.1"/>
    </reaction>
</comment>
<comment type="cofactor">
    <cofactor evidence="1">
        <name>Mn(2+)</name>
        <dbReference type="ChEBI" id="CHEBI:29035"/>
    </cofactor>
    <text evidence="1">Binds 2 manganese ions per subunit.</text>
</comment>
<comment type="subcellular location">
    <subcellularLocation>
        <location evidence="1">Cytoplasm</location>
    </subcellularLocation>
</comment>
<comment type="similarity">
    <text evidence="1">Belongs to the PPase class C family.</text>
</comment>
<gene>
    <name evidence="1" type="primary">ppaC</name>
    <name type="ordered locus">SSP0872</name>
</gene>
<feature type="chain" id="PRO_1000012323" description="Probable manganese-dependent inorganic pyrophosphatase">
    <location>
        <begin position="1"/>
        <end position="309"/>
    </location>
</feature>
<feature type="binding site" evidence="1">
    <location>
        <position position="9"/>
    </location>
    <ligand>
        <name>Mn(2+)</name>
        <dbReference type="ChEBI" id="CHEBI:29035"/>
        <label>1</label>
    </ligand>
</feature>
<feature type="binding site" evidence="1">
    <location>
        <position position="13"/>
    </location>
    <ligand>
        <name>Mn(2+)</name>
        <dbReference type="ChEBI" id="CHEBI:29035"/>
        <label>1</label>
    </ligand>
</feature>
<feature type="binding site" evidence="1">
    <location>
        <position position="15"/>
    </location>
    <ligand>
        <name>Mn(2+)</name>
        <dbReference type="ChEBI" id="CHEBI:29035"/>
        <label>2</label>
    </ligand>
</feature>
<feature type="binding site" evidence="1">
    <location>
        <position position="75"/>
    </location>
    <ligand>
        <name>Mn(2+)</name>
        <dbReference type="ChEBI" id="CHEBI:29035"/>
        <label>1</label>
    </ligand>
</feature>
<feature type="binding site" evidence="1">
    <location>
        <position position="75"/>
    </location>
    <ligand>
        <name>Mn(2+)</name>
        <dbReference type="ChEBI" id="CHEBI:29035"/>
        <label>2</label>
    </ligand>
</feature>
<feature type="binding site" evidence="1">
    <location>
        <position position="97"/>
    </location>
    <ligand>
        <name>Mn(2+)</name>
        <dbReference type="ChEBI" id="CHEBI:29035"/>
        <label>2</label>
    </ligand>
</feature>
<feature type="binding site" evidence="1">
    <location>
        <position position="149"/>
    </location>
    <ligand>
        <name>Mn(2+)</name>
        <dbReference type="ChEBI" id="CHEBI:29035"/>
        <label>2</label>
    </ligand>
</feature>
<accession>Q49YW3</accession>
<sequence>MAKTYIFGHKNPDTDAISSAIIMADFEQQTGNAEATAYRLGEVGPETQYALDHFNVTAPELLNDDLADQNVILVDHNEFQQSADSIADAAVQHVVDHHRIANFETAAPLYYRAEPVGCTATILYKMYKERGFEIKPEIAGLMISAIISDSLLFKSPTCTEQDVQAAEALKSIANVDLESYGLEMLKAGASTKDKSVSDILSMDAKSFNMGDFVTRIGQVNTVDIDEVFARQEELEKEMLEVSANEKYDLFVLVVTDIINSDSKILVVGAEKDKVGVAFNVTLDNNTAFLPGVVSRKKQVVPQITEALTK</sequence>
<reference key="1">
    <citation type="journal article" date="2005" name="Proc. Natl. Acad. Sci. U.S.A.">
        <title>Whole genome sequence of Staphylococcus saprophyticus reveals the pathogenesis of uncomplicated urinary tract infection.</title>
        <authorList>
            <person name="Kuroda M."/>
            <person name="Yamashita A."/>
            <person name="Hirakawa H."/>
            <person name="Kumano M."/>
            <person name="Morikawa K."/>
            <person name="Higashide M."/>
            <person name="Maruyama A."/>
            <person name="Inose Y."/>
            <person name="Matoba K."/>
            <person name="Toh H."/>
            <person name="Kuhara S."/>
            <person name="Hattori M."/>
            <person name="Ohta T."/>
        </authorList>
    </citation>
    <scope>NUCLEOTIDE SEQUENCE [LARGE SCALE GENOMIC DNA]</scope>
    <source>
        <strain>ATCC 15305 / DSM 20229 / NCIMB 8711 / NCTC 7292 / S-41</strain>
    </source>
</reference>
<name>PPAC_STAS1</name>
<organism>
    <name type="scientific">Staphylococcus saprophyticus subsp. saprophyticus (strain ATCC 15305 / DSM 20229 / NCIMB 8711 / NCTC 7292 / S-41)</name>
    <dbReference type="NCBI Taxonomy" id="342451"/>
    <lineage>
        <taxon>Bacteria</taxon>
        <taxon>Bacillati</taxon>
        <taxon>Bacillota</taxon>
        <taxon>Bacilli</taxon>
        <taxon>Bacillales</taxon>
        <taxon>Staphylococcaceae</taxon>
        <taxon>Staphylococcus</taxon>
    </lineage>
</organism>
<evidence type="ECO:0000255" key="1">
    <source>
        <dbReference type="HAMAP-Rule" id="MF_00207"/>
    </source>
</evidence>
<protein>
    <recommendedName>
        <fullName evidence="1">Probable manganese-dependent inorganic pyrophosphatase</fullName>
        <ecNumber evidence="1">3.6.1.1</ecNumber>
    </recommendedName>
    <alternativeName>
        <fullName evidence="1">Pyrophosphate phospho-hydrolase</fullName>
        <shortName evidence="1">PPase</shortName>
    </alternativeName>
</protein>
<keyword id="KW-0963">Cytoplasm</keyword>
<keyword id="KW-0378">Hydrolase</keyword>
<keyword id="KW-0464">Manganese</keyword>
<keyword id="KW-0479">Metal-binding</keyword>
<keyword id="KW-1185">Reference proteome</keyword>